<name>RL23_THETH</name>
<keyword id="KW-0002">3D-structure</keyword>
<keyword id="KW-0687">Ribonucleoprotein</keyword>
<keyword id="KW-0689">Ribosomal protein</keyword>
<keyword id="KW-0694">RNA-binding</keyword>
<keyword id="KW-0699">rRNA-binding</keyword>
<dbReference type="EMBL" id="AF094532">
    <property type="protein sequence ID" value="AAD55971.1"/>
    <property type="molecule type" value="Genomic_DNA"/>
</dbReference>
<dbReference type="RefSeq" id="WP_008633421.1">
    <property type="nucleotide sequence ID" value="NZ_VHHQ01000024.1"/>
</dbReference>
<dbReference type="PDB" id="1N88">
    <property type="method" value="NMR"/>
    <property type="chains" value="A=1-96"/>
</dbReference>
<dbReference type="PDB" id="4V4X">
    <property type="method" value="X-ray"/>
    <property type="resolution" value="5.00 A"/>
    <property type="chains" value="BW=1-96"/>
</dbReference>
<dbReference type="PDB" id="4V4Y">
    <property type="method" value="X-ray"/>
    <property type="resolution" value="5.50 A"/>
    <property type="chains" value="BW=1-96"/>
</dbReference>
<dbReference type="PDB" id="4V4Z">
    <property type="method" value="X-ray"/>
    <property type="resolution" value="4.51 A"/>
    <property type="chains" value="BW=1-96"/>
</dbReference>
<dbReference type="PDBsum" id="1N88"/>
<dbReference type="PDBsum" id="4V4X"/>
<dbReference type="PDBsum" id="4V4Y"/>
<dbReference type="PDBsum" id="4V4Z"/>
<dbReference type="BMRB" id="Q9RA57"/>
<dbReference type="SMR" id="Q9RA57"/>
<dbReference type="OMA" id="DHRAAKP"/>
<dbReference type="EvolutionaryTrace" id="Q9RA57"/>
<dbReference type="GO" id="GO:1990904">
    <property type="term" value="C:ribonucleoprotein complex"/>
    <property type="evidence" value="ECO:0007669"/>
    <property type="project" value="UniProtKB-KW"/>
</dbReference>
<dbReference type="GO" id="GO:0005840">
    <property type="term" value="C:ribosome"/>
    <property type="evidence" value="ECO:0007669"/>
    <property type="project" value="UniProtKB-KW"/>
</dbReference>
<dbReference type="GO" id="GO:0019843">
    <property type="term" value="F:rRNA binding"/>
    <property type="evidence" value="ECO:0007669"/>
    <property type="project" value="UniProtKB-UniRule"/>
</dbReference>
<dbReference type="GO" id="GO:0003735">
    <property type="term" value="F:structural constituent of ribosome"/>
    <property type="evidence" value="ECO:0007669"/>
    <property type="project" value="InterPro"/>
</dbReference>
<dbReference type="GO" id="GO:0006412">
    <property type="term" value="P:translation"/>
    <property type="evidence" value="ECO:0007669"/>
    <property type="project" value="UniProtKB-UniRule"/>
</dbReference>
<dbReference type="FunFam" id="3.30.70.330:FF:000001">
    <property type="entry name" value="50S ribosomal protein L23"/>
    <property type="match status" value="1"/>
</dbReference>
<dbReference type="Gene3D" id="3.30.70.330">
    <property type="match status" value="1"/>
</dbReference>
<dbReference type="HAMAP" id="MF_01369_B">
    <property type="entry name" value="Ribosomal_uL23_B"/>
    <property type="match status" value="1"/>
</dbReference>
<dbReference type="InterPro" id="IPR012677">
    <property type="entry name" value="Nucleotide-bd_a/b_plait_sf"/>
</dbReference>
<dbReference type="InterPro" id="IPR013025">
    <property type="entry name" value="Ribosomal_uL23-like"/>
</dbReference>
<dbReference type="InterPro" id="IPR012678">
    <property type="entry name" value="Ribosomal_uL23/eL15/eS24_sf"/>
</dbReference>
<dbReference type="NCBIfam" id="NF004359">
    <property type="entry name" value="PRK05738.1-3"/>
    <property type="match status" value="1"/>
</dbReference>
<dbReference type="NCBIfam" id="NF004363">
    <property type="entry name" value="PRK05738.2-4"/>
    <property type="match status" value="1"/>
</dbReference>
<dbReference type="NCBIfam" id="NF004366">
    <property type="entry name" value="PRK05738.3-2"/>
    <property type="match status" value="1"/>
</dbReference>
<dbReference type="PANTHER" id="PTHR11620">
    <property type="entry name" value="60S RIBOSOMAL PROTEIN L23A"/>
    <property type="match status" value="1"/>
</dbReference>
<dbReference type="Pfam" id="PF00276">
    <property type="entry name" value="Ribosomal_L23"/>
    <property type="match status" value="1"/>
</dbReference>
<dbReference type="SUPFAM" id="SSF54189">
    <property type="entry name" value="Ribosomal proteins S24e, L23 and L15e"/>
    <property type="match status" value="1"/>
</dbReference>
<gene>
    <name evidence="1" type="primary">rplW</name>
</gene>
<organism>
    <name type="scientific">Thermus thermophilus</name>
    <dbReference type="NCBI Taxonomy" id="274"/>
    <lineage>
        <taxon>Bacteria</taxon>
        <taxon>Thermotogati</taxon>
        <taxon>Deinococcota</taxon>
        <taxon>Deinococci</taxon>
        <taxon>Thermales</taxon>
        <taxon>Thermaceae</taxon>
        <taxon>Thermus</taxon>
    </lineage>
</organism>
<protein>
    <recommendedName>
        <fullName evidence="1">Large ribosomal subunit protein uL23</fullName>
    </recommendedName>
    <alternativeName>
        <fullName evidence="2">50S ribosomal protein L23</fullName>
        <shortName>L*23</shortName>
    </alternativeName>
</protein>
<evidence type="ECO:0000255" key="1">
    <source>
        <dbReference type="HAMAP-Rule" id="MF_01369"/>
    </source>
</evidence>
<evidence type="ECO:0000305" key="2"/>
<evidence type="ECO:0007829" key="3">
    <source>
        <dbReference type="PDB" id="1N88"/>
    </source>
</evidence>
<feature type="chain" id="PRO_0000129428" description="Large ribosomal subunit protein uL23">
    <location>
        <begin position="1"/>
        <end position="96"/>
    </location>
</feature>
<feature type="turn" evidence="3">
    <location>
        <begin position="4"/>
        <end position="7"/>
    </location>
</feature>
<feature type="strand" evidence="3">
    <location>
        <begin position="8"/>
        <end position="11"/>
    </location>
</feature>
<feature type="helix" evidence="3">
    <location>
        <begin position="15"/>
        <end position="21"/>
    </location>
</feature>
<feature type="turn" evidence="3">
    <location>
        <begin position="22"/>
        <end position="24"/>
    </location>
</feature>
<feature type="strand" evidence="3">
    <location>
        <begin position="25"/>
        <end position="30"/>
    </location>
</feature>
<feature type="helix" evidence="3">
    <location>
        <begin position="36"/>
        <end position="46"/>
    </location>
</feature>
<feature type="strand" evidence="3">
    <location>
        <begin position="51"/>
        <end position="59"/>
    </location>
</feature>
<feature type="strand" evidence="3">
    <location>
        <begin position="62"/>
        <end position="65"/>
    </location>
</feature>
<feature type="turn" evidence="3">
    <location>
        <begin position="66"/>
        <end position="69"/>
    </location>
</feature>
<feature type="strand" evidence="3">
    <location>
        <begin position="76"/>
        <end position="83"/>
    </location>
</feature>
<feature type="helix" evidence="3">
    <location>
        <begin position="90"/>
        <end position="93"/>
    </location>
</feature>
<comment type="function">
    <text evidence="1">One of the early assembly proteins it binds 23S rRNA. One of the proteins that surrounds the polypeptide exit tunnel on the outside of the ribosome. Forms the main docking site for trigger factor binding to the ribosome.</text>
</comment>
<comment type="subunit">
    <text evidence="1">Part of the 50S ribosomal subunit. Contacts protein L29, and trigger factor when it is bound to the ribosome.</text>
</comment>
<comment type="similarity">
    <text evidence="1">Belongs to the universal ribosomal protein uL23 family.</text>
</comment>
<reference key="1">
    <citation type="submission" date="1998-09" db="EMBL/GenBank/DDBJ databases">
        <title>Overexpression of the gene of ribosomal protein L23 from Thermus thermophilus and crystallization of the recombinant protein.</title>
        <authorList>
            <person name="Dontsova M.V."/>
            <person name="Shcherbakov D.V."/>
            <person name="Garber M.B."/>
        </authorList>
    </citation>
    <scope>NUCLEOTIDE SEQUENCE [GENOMIC DNA]</scope>
    <source>
        <strain>VK1</strain>
    </source>
</reference>
<reference key="2">
    <citation type="journal article" date="2003" name="J. Biomol. NMR">
        <title>NMR structure of the ribosomal protein L23 from Thermus thermophilus.</title>
        <authorList>
            <person name="Oehman A."/>
            <person name="Rak A."/>
            <person name="Dontsova M."/>
            <person name="Garber M.B."/>
            <person name="Haerd T."/>
        </authorList>
    </citation>
    <scope>STRUCTURE BY NMR</scope>
</reference>
<sequence>MKTAYDVILAPVLSEKAYAGFAEGKYTFWVHPKATKTEIKNAVETAFKVKVVKVNTLHVRGKKKRLGRYLGKRPDRKKAIVQVAPGQKIEALEGLI</sequence>
<proteinExistence type="evidence at protein level"/>
<accession>Q9RA57</accession>